<sequence length="88" mass="9779">MGTARFLSAVLLLSVLLMVTFPALLSAEYHDGRVDICSLPSDSGDCLRFFEMWYFDGTTCTKFVYGGYGGNDNRFPTEKACMKRCAKA</sequence>
<protein>
    <recommendedName>
        <fullName>Kunitz-type U15-theraphotoxin-Hs1a</fullName>
        <shortName>U15-TRTX-Hs1a</shortName>
    </recommendedName>
    <alternativeName>
        <fullName evidence="5">Huwentoxin-11g3</fullName>
        <shortName evidence="5">HW11g3</shortName>
    </alternativeName>
    <alternativeName>
        <fullName evidence="6">Kunitz-type serine protease inhibitor HWTX-XI-IS33</fullName>
    </alternativeName>
</protein>
<keyword id="KW-1015">Disulfide bond</keyword>
<keyword id="KW-0646">Protease inhibitor</keyword>
<keyword id="KW-0964">Secreted</keyword>
<keyword id="KW-0722">Serine protease inhibitor</keyword>
<keyword id="KW-0732">Signal</keyword>
<comment type="function">
    <text evidence="2">Serine protease inhibitor that inhibits trypsin at a molar ratio of 1:1.</text>
</comment>
<comment type="subcellular location">
    <subcellularLocation>
        <location evidence="8">Secreted</location>
    </subcellularLocation>
</comment>
<comment type="tissue specificity">
    <text evidence="8">Expressed by the venom gland.</text>
</comment>
<comment type="similarity">
    <text evidence="7">Belongs to the venom Kunitz-type family. 03 (sub-Kunitz) subfamily.</text>
</comment>
<organism>
    <name type="scientific">Cyriopagopus schmidti</name>
    <name type="common">Chinese bird spider</name>
    <name type="synonym">Haplopelma schmidti</name>
    <dbReference type="NCBI Taxonomy" id="29017"/>
    <lineage>
        <taxon>Eukaryota</taxon>
        <taxon>Metazoa</taxon>
        <taxon>Ecdysozoa</taxon>
        <taxon>Arthropoda</taxon>
        <taxon>Chelicerata</taxon>
        <taxon>Arachnida</taxon>
        <taxon>Araneae</taxon>
        <taxon>Mygalomorphae</taxon>
        <taxon>Theraphosidae</taxon>
        <taxon>Cyriopagopus</taxon>
    </lineage>
</organism>
<proteinExistence type="inferred from homology"/>
<dbReference type="EMBL" id="EU635746">
    <property type="protein sequence ID" value="ACD01238.1"/>
    <property type="molecule type" value="Genomic_DNA"/>
</dbReference>
<dbReference type="SMR" id="B2ZBB8"/>
<dbReference type="ArachnoServer" id="AS000481">
    <property type="toxin name" value="U15-theraphotoxin-Hs1a"/>
</dbReference>
<dbReference type="GO" id="GO:0005576">
    <property type="term" value="C:extracellular region"/>
    <property type="evidence" value="ECO:0007669"/>
    <property type="project" value="UniProtKB-SubCell"/>
</dbReference>
<dbReference type="GO" id="GO:0015459">
    <property type="term" value="F:potassium channel regulator activity"/>
    <property type="evidence" value="ECO:0007669"/>
    <property type="project" value="UniProtKB-KW"/>
</dbReference>
<dbReference type="GO" id="GO:0004867">
    <property type="term" value="F:serine-type endopeptidase inhibitor activity"/>
    <property type="evidence" value="ECO:0007669"/>
    <property type="project" value="UniProtKB-KW"/>
</dbReference>
<dbReference type="GO" id="GO:0090729">
    <property type="term" value="F:toxin activity"/>
    <property type="evidence" value="ECO:0007669"/>
    <property type="project" value="UniProtKB-KW"/>
</dbReference>
<dbReference type="GO" id="GO:0044562">
    <property type="term" value="P:envenomation resulting in negative regulation of voltage-gated potassium channel activity in another organism"/>
    <property type="evidence" value="ECO:0007669"/>
    <property type="project" value="UniProtKB-ARBA"/>
</dbReference>
<dbReference type="CDD" id="cd22598">
    <property type="entry name" value="Kunitz_huwentoxin"/>
    <property type="match status" value="1"/>
</dbReference>
<dbReference type="FunFam" id="4.10.410.10:FF:000020">
    <property type="entry name" value="Collagen, type VI, alpha 3"/>
    <property type="match status" value="1"/>
</dbReference>
<dbReference type="Gene3D" id="4.10.410.10">
    <property type="entry name" value="Pancreatic trypsin inhibitor Kunitz domain"/>
    <property type="match status" value="1"/>
</dbReference>
<dbReference type="InterPro" id="IPR002223">
    <property type="entry name" value="Kunitz_BPTI"/>
</dbReference>
<dbReference type="InterPro" id="IPR036880">
    <property type="entry name" value="Kunitz_BPTI_sf"/>
</dbReference>
<dbReference type="InterPro" id="IPR051388">
    <property type="entry name" value="Serpin_venom_toxin"/>
</dbReference>
<dbReference type="PANTHER" id="PTHR46751">
    <property type="entry name" value="EPPIN"/>
    <property type="match status" value="1"/>
</dbReference>
<dbReference type="PANTHER" id="PTHR46751:SF1">
    <property type="entry name" value="WAP FOUR-DISULFIDE CORE DOMAIN PROTEIN 6A"/>
    <property type="match status" value="1"/>
</dbReference>
<dbReference type="Pfam" id="PF00014">
    <property type="entry name" value="Kunitz_BPTI"/>
    <property type="match status" value="1"/>
</dbReference>
<dbReference type="PRINTS" id="PR00759">
    <property type="entry name" value="BASICPTASE"/>
</dbReference>
<dbReference type="SMART" id="SM00131">
    <property type="entry name" value="KU"/>
    <property type="match status" value="1"/>
</dbReference>
<dbReference type="SUPFAM" id="SSF57362">
    <property type="entry name" value="BPTI-like"/>
    <property type="match status" value="1"/>
</dbReference>
<dbReference type="PROSITE" id="PS50279">
    <property type="entry name" value="BPTI_KUNITZ_2"/>
    <property type="match status" value="1"/>
</dbReference>
<name>VKT33_CYRSC</name>
<accession>B2ZBB8</accession>
<accession>P0DJ83</accession>
<feature type="signal peptide" evidence="3">
    <location>
        <begin position="1"/>
        <end position="27"/>
    </location>
</feature>
<feature type="propeptide" id="PRO_0000413840" evidence="1">
    <location>
        <begin position="28"/>
        <end position="33"/>
    </location>
</feature>
<feature type="chain" id="PRO_0000413841" description="Kunitz-type U15-theraphotoxin-Hs1a">
    <location>
        <begin position="34"/>
        <end position="88"/>
    </location>
</feature>
<feature type="domain" description="BPTI/Kunitz inhibitor" evidence="4">
    <location>
        <begin position="37"/>
        <end position="85"/>
    </location>
</feature>
<feature type="site" description="May bind Kv1" evidence="1">
    <location>
        <position position="39"/>
    </location>
</feature>
<feature type="site" description="Reactive bond for chymotrypsin" evidence="1">
    <location>
        <begin position="47"/>
        <end position="48"/>
    </location>
</feature>
<feature type="disulfide bond" evidence="4">
    <location>
        <begin position="37"/>
        <end position="85"/>
    </location>
</feature>
<feature type="disulfide bond" evidence="4">
    <location>
        <begin position="60"/>
        <end position="81"/>
    </location>
</feature>
<evidence type="ECO:0000250" key="1"/>
<evidence type="ECO:0000250" key="2">
    <source>
        <dbReference type="UniProtKB" id="P68425"/>
    </source>
</evidence>
<evidence type="ECO:0000255" key="3"/>
<evidence type="ECO:0000255" key="4">
    <source>
        <dbReference type="PROSITE-ProRule" id="PRU00031"/>
    </source>
</evidence>
<evidence type="ECO:0000303" key="5">
    <source>
    </source>
</evidence>
<evidence type="ECO:0000303" key="6">
    <source>
    </source>
</evidence>
<evidence type="ECO:0000305" key="7"/>
<evidence type="ECO:0000305" key="8">
    <source>
    </source>
</evidence>
<reference key="1">
    <citation type="journal article" date="2008" name="Peptides">
        <title>Genomic organization and cloning of novel genes encoding toxin-like peptides of three superfamilies from the spider Orinithoctonus huwena.</title>
        <authorList>
            <person name="Jiang L."/>
            <person name="Chen J."/>
            <person name="Peng L."/>
            <person name="Zhang Y."/>
            <person name="Xiong X."/>
            <person name="Liang S."/>
        </authorList>
    </citation>
    <scope>NUCLEOTIDE SEQUENCE [GENOMIC DNA]</scope>
</reference>
<reference key="2">
    <citation type="journal article" date="2008" name="PLoS ONE">
        <title>Discovery of a distinct superfamily of Kunitz-type toxin (KTT) from tarantulas.</title>
        <authorList>
            <person name="Yuan C.-H."/>
            <person name="He Q.-Y."/>
            <person name="Peng K."/>
            <person name="Diao J.-B."/>
            <person name="Jiang L.-P."/>
            <person name="Tang X."/>
            <person name="Liang S.-P."/>
        </authorList>
    </citation>
    <scope>NUCLEOTIDE SEQUENCE [MRNA]</scope>
    <source>
        <tissue>Venom gland</tissue>
    </source>
</reference>